<name>Y915_BORA1</name>
<sequence length="108" mass="11516">MMKGQLAGLMRQAQQMQENMKKAQDALADILVEGAAGGGLVKVTMSCRNDVKRIAIDPSLLADDKDMLEDLVAAAFNDALRKAEATSQEKMSALTAGLPLPPGMKLPF</sequence>
<comment type="function">
    <text evidence="1">Binds to DNA and alters its conformation. May be involved in regulation of gene expression, nucleoid organization and DNA protection.</text>
</comment>
<comment type="subunit">
    <text evidence="1">Homodimer.</text>
</comment>
<comment type="subcellular location">
    <subcellularLocation>
        <location evidence="1">Cytoplasm</location>
        <location evidence="1">Nucleoid</location>
    </subcellularLocation>
</comment>
<comment type="similarity">
    <text evidence="1">Belongs to the YbaB/EbfC family.</text>
</comment>
<dbReference type="EMBL" id="AM167904">
    <property type="protein sequence ID" value="CAJ48526.1"/>
    <property type="molecule type" value="Genomic_DNA"/>
</dbReference>
<dbReference type="RefSeq" id="WP_012416605.1">
    <property type="nucleotide sequence ID" value="NC_010645.1"/>
</dbReference>
<dbReference type="SMR" id="Q2KVU6"/>
<dbReference type="STRING" id="360910.BAV0915"/>
<dbReference type="GeneID" id="92935892"/>
<dbReference type="KEGG" id="bav:BAV0915"/>
<dbReference type="eggNOG" id="COG0718">
    <property type="taxonomic scope" value="Bacteria"/>
</dbReference>
<dbReference type="HOGENOM" id="CLU_140930_0_0_4"/>
<dbReference type="OrthoDB" id="9808738at2"/>
<dbReference type="Proteomes" id="UP000001977">
    <property type="component" value="Chromosome"/>
</dbReference>
<dbReference type="GO" id="GO:0043590">
    <property type="term" value="C:bacterial nucleoid"/>
    <property type="evidence" value="ECO:0007669"/>
    <property type="project" value="UniProtKB-UniRule"/>
</dbReference>
<dbReference type="GO" id="GO:0005829">
    <property type="term" value="C:cytosol"/>
    <property type="evidence" value="ECO:0007669"/>
    <property type="project" value="TreeGrafter"/>
</dbReference>
<dbReference type="GO" id="GO:0003677">
    <property type="term" value="F:DNA binding"/>
    <property type="evidence" value="ECO:0007669"/>
    <property type="project" value="UniProtKB-UniRule"/>
</dbReference>
<dbReference type="Gene3D" id="3.30.1310.10">
    <property type="entry name" value="Nucleoid-associated protein YbaB-like domain"/>
    <property type="match status" value="1"/>
</dbReference>
<dbReference type="HAMAP" id="MF_00274">
    <property type="entry name" value="DNA_YbaB_EbfC"/>
    <property type="match status" value="1"/>
</dbReference>
<dbReference type="InterPro" id="IPR036894">
    <property type="entry name" value="YbaB-like_sf"/>
</dbReference>
<dbReference type="InterPro" id="IPR004401">
    <property type="entry name" value="YbaB/EbfC"/>
</dbReference>
<dbReference type="NCBIfam" id="TIGR00103">
    <property type="entry name" value="DNA_YbaB_EbfC"/>
    <property type="match status" value="1"/>
</dbReference>
<dbReference type="PANTHER" id="PTHR33449">
    <property type="entry name" value="NUCLEOID-ASSOCIATED PROTEIN YBAB"/>
    <property type="match status" value="1"/>
</dbReference>
<dbReference type="PANTHER" id="PTHR33449:SF1">
    <property type="entry name" value="NUCLEOID-ASSOCIATED PROTEIN YBAB"/>
    <property type="match status" value="1"/>
</dbReference>
<dbReference type="Pfam" id="PF02575">
    <property type="entry name" value="YbaB_DNA_bd"/>
    <property type="match status" value="1"/>
</dbReference>
<dbReference type="PIRSF" id="PIRSF004555">
    <property type="entry name" value="UCP004555"/>
    <property type="match status" value="1"/>
</dbReference>
<dbReference type="SUPFAM" id="SSF82607">
    <property type="entry name" value="YbaB-like"/>
    <property type="match status" value="1"/>
</dbReference>
<evidence type="ECO:0000255" key="1">
    <source>
        <dbReference type="HAMAP-Rule" id="MF_00274"/>
    </source>
</evidence>
<keyword id="KW-0963">Cytoplasm</keyword>
<keyword id="KW-0238">DNA-binding</keyword>
<keyword id="KW-1185">Reference proteome</keyword>
<protein>
    <recommendedName>
        <fullName evidence="1">Nucleoid-associated protein BAV0915</fullName>
    </recommendedName>
</protein>
<organism>
    <name type="scientific">Bordetella avium (strain 197N)</name>
    <dbReference type="NCBI Taxonomy" id="360910"/>
    <lineage>
        <taxon>Bacteria</taxon>
        <taxon>Pseudomonadati</taxon>
        <taxon>Pseudomonadota</taxon>
        <taxon>Betaproteobacteria</taxon>
        <taxon>Burkholderiales</taxon>
        <taxon>Alcaligenaceae</taxon>
        <taxon>Bordetella</taxon>
    </lineage>
</organism>
<feature type="chain" id="PRO_1000003691" description="Nucleoid-associated protein BAV0915">
    <location>
        <begin position="1"/>
        <end position="108"/>
    </location>
</feature>
<gene>
    <name type="ordered locus">BAV0915</name>
</gene>
<accession>Q2KVU6</accession>
<proteinExistence type="inferred from homology"/>
<reference key="1">
    <citation type="journal article" date="2006" name="J. Bacteriol.">
        <title>Comparison of the genome sequence of the poultry pathogen Bordetella avium with those of B. bronchiseptica, B. pertussis, and B. parapertussis reveals extensive diversity in surface structures associated with host interaction.</title>
        <authorList>
            <person name="Sebaihia M."/>
            <person name="Preston A."/>
            <person name="Maskell D.J."/>
            <person name="Kuzmiak H."/>
            <person name="Connell T.D."/>
            <person name="King N.D."/>
            <person name="Orndorff P.E."/>
            <person name="Miyamoto D.M."/>
            <person name="Thomson N.R."/>
            <person name="Harris D."/>
            <person name="Goble A."/>
            <person name="Lord A."/>
            <person name="Murphy L."/>
            <person name="Quail M.A."/>
            <person name="Rutter S."/>
            <person name="Squares R."/>
            <person name="Squares S."/>
            <person name="Woodward J."/>
            <person name="Parkhill J."/>
            <person name="Temple L.M."/>
        </authorList>
    </citation>
    <scope>NUCLEOTIDE SEQUENCE [LARGE SCALE GENOMIC DNA]</scope>
    <source>
        <strain>197N</strain>
    </source>
</reference>